<proteinExistence type="inferred from homology"/>
<comment type="function">
    <text evidence="1">Necessary for efficient RNA polymerase transcription elongation past template-encoded arresting sites. The arresting sites in DNA have the property of trapping a certain fraction of elongating RNA polymerases that pass through, resulting in locked ternary complexes. Cleavage of the nascent transcript by cleavage factors such as GreA or GreB allows the resumption of elongation from the new 3'terminus. GreA releases sequences of 2 to 3 nucleotides.</text>
</comment>
<comment type="similarity">
    <text evidence="1">Belongs to the GreA/GreB family.</text>
</comment>
<reference key="1">
    <citation type="journal article" date="2001" name="Science">
        <title>Comparative genomics of Listeria species.</title>
        <authorList>
            <person name="Glaser P."/>
            <person name="Frangeul L."/>
            <person name="Buchrieser C."/>
            <person name="Rusniok C."/>
            <person name="Amend A."/>
            <person name="Baquero F."/>
            <person name="Berche P."/>
            <person name="Bloecker H."/>
            <person name="Brandt P."/>
            <person name="Chakraborty T."/>
            <person name="Charbit A."/>
            <person name="Chetouani F."/>
            <person name="Couve E."/>
            <person name="de Daruvar A."/>
            <person name="Dehoux P."/>
            <person name="Domann E."/>
            <person name="Dominguez-Bernal G."/>
            <person name="Duchaud E."/>
            <person name="Durant L."/>
            <person name="Dussurget O."/>
            <person name="Entian K.-D."/>
            <person name="Fsihi H."/>
            <person name="Garcia-del Portillo F."/>
            <person name="Garrido P."/>
            <person name="Gautier L."/>
            <person name="Goebel W."/>
            <person name="Gomez-Lopez N."/>
            <person name="Hain T."/>
            <person name="Hauf J."/>
            <person name="Jackson D."/>
            <person name="Jones L.-M."/>
            <person name="Kaerst U."/>
            <person name="Kreft J."/>
            <person name="Kuhn M."/>
            <person name="Kunst F."/>
            <person name="Kurapkat G."/>
            <person name="Madueno E."/>
            <person name="Maitournam A."/>
            <person name="Mata Vicente J."/>
            <person name="Ng E."/>
            <person name="Nedjari H."/>
            <person name="Nordsiek G."/>
            <person name="Novella S."/>
            <person name="de Pablos B."/>
            <person name="Perez-Diaz J.-C."/>
            <person name="Purcell R."/>
            <person name="Remmel B."/>
            <person name="Rose M."/>
            <person name="Schlueter T."/>
            <person name="Simoes N."/>
            <person name="Tierrez A."/>
            <person name="Vazquez-Boland J.-A."/>
            <person name="Voss H."/>
            <person name="Wehland J."/>
            <person name="Cossart P."/>
        </authorList>
    </citation>
    <scope>NUCLEOTIDE SEQUENCE [LARGE SCALE GENOMIC DNA]</scope>
    <source>
        <strain>ATCC BAA-680 / CLIP 11262</strain>
    </source>
</reference>
<organism>
    <name type="scientific">Listeria innocua serovar 6a (strain ATCC BAA-680 / CLIP 11262)</name>
    <dbReference type="NCBI Taxonomy" id="272626"/>
    <lineage>
        <taxon>Bacteria</taxon>
        <taxon>Bacillati</taxon>
        <taxon>Bacillota</taxon>
        <taxon>Bacilli</taxon>
        <taxon>Bacillales</taxon>
        <taxon>Listeriaceae</taxon>
        <taxon>Listeria</taxon>
    </lineage>
</organism>
<protein>
    <recommendedName>
        <fullName evidence="1">Transcription elongation factor GreA</fullName>
    </recommendedName>
    <alternativeName>
        <fullName evidence="1">Transcript cleavage factor GreA</fullName>
    </alternativeName>
</protein>
<gene>
    <name evidence="1" type="primary">greA</name>
    <name type="ordered locus">lin1531</name>
</gene>
<sequence>MATEKVFPMTLDGKAKLENELQELKTVKRKEVVERIKIARSFGDLSENSEYDSAKDEQAFVEGRITTIENMIRNAQIIDAAEAHNGLVTLGNTVTFIELPDGEEETYTIVGSAEADPFEGKISNDSPIAKGLLGHKEGEEVTIQTPAGDMSVKIEKITAS</sequence>
<evidence type="ECO:0000255" key="1">
    <source>
        <dbReference type="HAMAP-Rule" id="MF_00105"/>
    </source>
</evidence>
<dbReference type="EMBL" id="AL596168">
    <property type="protein sequence ID" value="CAC96762.1"/>
    <property type="molecule type" value="Genomic_DNA"/>
</dbReference>
<dbReference type="PIR" id="AB1624">
    <property type="entry name" value="AB1624"/>
</dbReference>
<dbReference type="RefSeq" id="WP_003722004.1">
    <property type="nucleotide sequence ID" value="NC_003212.1"/>
</dbReference>
<dbReference type="SMR" id="P64278"/>
<dbReference type="STRING" id="272626.gene:17565862"/>
<dbReference type="GeneID" id="93239373"/>
<dbReference type="KEGG" id="lin:lin1531"/>
<dbReference type="eggNOG" id="COG0782">
    <property type="taxonomic scope" value="Bacteria"/>
</dbReference>
<dbReference type="HOGENOM" id="CLU_101379_2_1_9"/>
<dbReference type="OrthoDB" id="9808774at2"/>
<dbReference type="Proteomes" id="UP000002513">
    <property type="component" value="Chromosome"/>
</dbReference>
<dbReference type="GO" id="GO:0003677">
    <property type="term" value="F:DNA binding"/>
    <property type="evidence" value="ECO:0007669"/>
    <property type="project" value="UniProtKB-UniRule"/>
</dbReference>
<dbReference type="GO" id="GO:0070063">
    <property type="term" value="F:RNA polymerase binding"/>
    <property type="evidence" value="ECO:0007669"/>
    <property type="project" value="InterPro"/>
</dbReference>
<dbReference type="GO" id="GO:0006354">
    <property type="term" value="P:DNA-templated transcription elongation"/>
    <property type="evidence" value="ECO:0007669"/>
    <property type="project" value="TreeGrafter"/>
</dbReference>
<dbReference type="GO" id="GO:0032784">
    <property type="term" value="P:regulation of DNA-templated transcription elongation"/>
    <property type="evidence" value="ECO:0007669"/>
    <property type="project" value="UniProtKB-UniRule"/>
</dbReference>
<dbReference type="FunFam" id="1.10.287.180:FF:000001">
    <property type="entry name" value="Transcription elongation factor GreA"/>
    <property type="match status" value="1"/>
</dbReference>
<dbReference type="FunFam" id="3.10.50.30:FF:000001">
    <property type="entry name" value="Transcription elongation factor GreA"/>
    <property type="match status" value="1"/>
</dbReference>
<dbReference type="Gene3D" id="3.10.50.30">
    <property type="entry name" value="Transcription elongation factor, GreA/GreB, C-terminal domain"/>
    <property type="match status" value="1"/>
</dbReference>
<dbReference type="Gene3D" id="1.10.287.180">
    <property type="entry name" value="Transcription elongation factor, GreA/GreB, N-terminal domain"/>
    <property type="match status" value="1"/>
</dbReference>
<dbReference type="HAMAP" id="MF_00105">
    <property type="entry name" value="GreA_GreB"/>
    <property type="match status" value="1"/>
</dbReference>
<dbReference type="InterPro" id="IPR036953">
    <property type="entry name" value="GreA/GreB_C_sf"/>
</dbReference>
<dbReference type="InterPro" id="IPR018151">
    <property type="entry name" value="TF_GreA/GreB_CS"/>
</dbReference>
<dbReference type="InterPro" id="IPR006359">
    <property type="entry name" value="Tscrpt_elong_fac_GreA"/>
</dbReference>
<dbReference type="InterPro" id="IPR028624">
    <property type="entry name" value="Tscrpt_elong_fac_GreA/B"/>
</dbReference>
<dbReference type="InterPro" id="IPR001437">
    <property type="entry name" value="Tscrpt_elong_fac_GreA/B_C"/>
</dbReference>
<dbReference type="InterPro" id="IPR023459">
    <property type="entry name" value="Tscrpt_elong_fac_GreA/B_fam"/>
</dbReference>
<dbReference type="InterPro" id="IPR022691">
    <property type="entry name" value="Tscrpt_elong_fac_GreA/B_N"/>
</dbReference>
<dbReference type="InterPro" id="IPR036805">
    <property type="entry name" value="Tscrpt_elong_fac_GreA/B_N_sf"/>
</dbReference>
<dbReference type="NCBIfam" id="TIGR01462">
    <property type="entry name" value="greA"/>
    <property type="match status" value="1"/>
</dbReference>
<dbReference type="NCBIfam" id="NF001261">
    <property type="entry name" value="PRK00226.1-2"/>
    <property type="match status" value="1"/>
</dbReference>
<dbReference type="NCBIfam" id="NF001263">
    <property type="entry name" value="PRK00226.1-4"/>
    <property type="match status" value="1"/>
</dbReference>
<dbReference type="PANTHER" id="PTHR30437">
    <property type="entry name" value="TRANSCRIPTION ELONGATION FACTOR GREA"/>
    <property type="match status" value="1"/>
</dbReference>
<dbReference type="PANTHER" id="PTHR30437:SF4">
    <property type="entry name" value="TRANSCRIPTION ELONGATION FACTOR GREA"/>
    <property type="match status" value="1"/>
</dbReference>
<dbReference type="Pfam" id="PF01272">
    <property type="entry name" value="GreA_GreB"/>
    <property type="match status" value="1"/>
</dbReference>
<dbReference type="Pfam" id="PF03449">
    <property type="entry name" value="GreA_GreB_N"/>
    <property type="match status" value="1"/>
</dbReference>
<dbReference type="PIRSF" id="PIRSF006092">
    <property type="entry name" value="GreA_GreB"/>
    <property type="match status" value="1"/>
</dbReference>
<dbReference type="SUPFAM" id="SSF54534">
    <property type="entry name" value="FKBP-like"/>
    <property type="match status" value="1"/>
</dbReference>
<dbReference type="SUPFAM" id="SSF46557">
    <property type="entry name" value="GreA transcript cleavage protein, N-terminal domain"/>
    <property type="match status" value="1"/>
</dbReference>
<dbReference type="PROSITE" id="PS00829">
    <property type="entry name" value="GREAB_1"/>
    <property type="match status" value="1"/>
</dbReference>
<dbReference type="PROSITE" id="PS00830">
    <property type="entry name" value="GREAB_2"/>
    <property type="match status" value="1"/>
</dbReference>
<name>GREA_LISIN</name>
<feature type="chain" id="PRO_0000176936" description="Transcription elongation factor GreA">
    <location>
        <begin position="1"/>
        <end position="160"/>
    </location>
</feature>
<feature type="coiled-coil region" evidence="1">
    <location>
        <begin position="10"/>
        <end position="37"/>
    </location>
</feature>
<accession>P64278</accession>
<accession>Q92BL7</accession>
<keyword id="KW-0175">Coiled coil</keyword>
<keyword id="KW-0238">DNA-binding</keyword>
<keyword id="KW-0804">Transcription</keyword>
<keyword id="KW-0805">Transcription regulation</keyword>